<accession>Q0GY41</accession>
<protein>
    <recommendedName>
        <fullName evidence="7">Potassium channel toxin Hge-beta-KTx</fullName>
        <shortName evidence="5">HgebetaKTx</shortName>
    </recommendedName>
</protein>
<comment type="function">
    <text evidence="4">The full peptide presents antibacterial and cytotoxic activities. The synthetic C-terminus (AA 33-76) inhibits voltage-gated potassium channels Kv1.1/KCNA1, Kv1.2/KCNA2, and Kv1.3/KCNA3.</text>
</comment>
<comment type="subcellular location">
    <subcellularLocation>
        <location evidence="3 4">Secreted</location>
    </subcellularLocation>
</comment>
<comment type="tissue specificity">
    <text evidence="7 8">Expressed by the venom gland.</text>
</comment>
<comment type="mass spectrometry"/>
<comment type="similarity">
    <text evidence="6">Belongs to the long chain scorpion toxin family. Class 2 subfamily.</text>
</comment>
<dbReference type="EMBL" id="DQ465350">
    <property type="protein sequence ID" value="ABE98266.1"/>
    <property type="molecule type" value="mRNA"/>
</dbReference>
<dbReference type="EMBL" id="EL698909">
    <property type="status" value="NOT_ANNOTATED_CDS"/>
    <property type="molecule type" value="mRNA"/>
</dbReference>
<dbReference type="SMR" id="Q0GY41"/>
<dbReference type="GO" id="GO:0005576">
    <property type="term" value="C:extracellular region"/>
    <property type="evidence" value="ECO:0007669"/>
    <property type="project" value="UniProtKB-SubCell"/>
</dbReference>
<dbReference type="GO" id="GO:0015459">
    <property type="term" value="F:potassium channel regulator activity"/>
    <property type="evidence" value="ECO:0007669"/>
    <property type="project" value="UniProtKB-KW"/>
</dbReference>
<dbReference type="GO" id="GO:0090729">
    <property type="term" value="F:toxin activity"/>
    <property type="evidence" value="ECO:0007669"/>
    <property type="project" value="UniProtKB-KW"/>
</dbReference>
<dbReference type="GO" id="GO:0042742">
    <property type="term" value="P:defense response to bacterium"/>
    <property type="evidence" value="ECO:0007669"/>
    <property type="project" value="UniProtKB-KW"/>
</dbReference>
<dbReference type="InterPro" id="IPR029237">
    <property type="entry name" value="Long_scorpion_toxin_alpha/beta"/>
</dbReference>
<dbReference type="Pfam" id="PF14866">
    <property type="entry name" value="Scorpion_toxin_alpha-beta"/>
    <property type="match status" value="1"/>
</dbReference>
<dbReference type="PROSITE" id="PS51862">
    <property type="entry name" value="BSPN_CSAB"/>
    <property type="match status" value="1"/>
</dbReference>
<organism>
    <name type="scientific">Hoffmannihadrurus gertschi</name>
    <name type="common">Scorpion</name>
    <name type="synonym">Hadrurus gertschi</name>
    <dbReference type="NCBI Taxonomy" id="380989"/>
    <lineage>
        <taxon>Eukaryota</taxon>
        <taxon>Metazoa</taxon>
        <taxon>Ecdysozoa</taxon>
        <taxon>Arthropoda</taxon>
        <taxon>Chelicerata</taxon>
        <taxon>Arachnida</taxon>
        <taxon>Scorpiones</taxon>
        <taxon>Iurida</taxon>
        <taxon>Iuroidea</taxon>
        <taxon>Hadrurus</taxon>
    </lineage>
</organism>
<reference key="1">
    <citation type="journal article" date="2007" name="BMC Genomics">
        <title>Transcriptome analysis of the venom gland of the Mexican scorpion Hadrurus gertschi (Arachnida: Scorpiones).</title>
        <authorList>
            <person name="Schwartz E.F."/>
            <person name="Diego-Garcia E."/>
            <person name="Rodriguez de la Vega R.C."/>
            <person name="Possani L.D."/>
        </authorList>
    </citation>
    <scope>NUCLEOTIDE SEQUENCE [LARGE SCALE MRNA]</scope>
    <source>
        <tissue>Venom gland</tissue>
    </source>
</reference>
<reference key="2">
    <citation type="journal article" date="2007" name="Peptides">
        <title>Wide phylogenetic distribution of scorpine and long-chain beta-KTx-like peptides in scorpion venoms: identification of 'orphan' components.</title>
        <authorList>
            <person name="Diego-Garcia E."/>
            <person name="Schwartz E.F."/>
            <person name="D'Suze G."/>
            <person name="Gonzalez S.A."/>
            <person name="Batista C.V."/>
            <person name="Garcia B.I."/>
            <person name="Rodriguez de la Vega R.C."/>
            <person name="Possani L.D."/>
        </authorList>
    </citation>
    <scope>NUCLEOTIDE SEQUENCE [MRNA]</scope>
    <scope>PROTEIN SEQUENCE OF 22-59</scope>
    <scope>MASS SPECTROMETRY</scope>
    <scope>SUBCELLULAR LOCATION</scope>
    <source>
        <tissue>Venom</tissue>
        <tissue>Venom gland</tissue>
    </source>
</reference>
<reference key="3">
    <citation type="journal article" date="2008" name="Cell. Mol. Life Sci.">
        <title>Cytolytic and K+ channel blocking activities of beta-KTx and scorpine-like peptides purified from scorpion venoms.</title>
        <authorList>
            <person name="Diego-Garcia E."/>
            <person name="Abdel-Mottaleb Y."/>
            <person name="Schwartz E.F."/>
            <person name="Rodriguez de la Vega R.C."/>
            <person name="Tytgat J."/>
            <person name="Possani L.D."/>
        </authorList>
    </citation>
    <scope>PROTEIN SEQUENCE OF 22-59</scope>
    <scope>FUNCTION</scope>
    <scope>SUBCELLULAR LOCATION</scope>
</reference>
<name>KBX2_HOFGE</name>
<feature type="signal peptide" evidence="1">
    <location>
        <begin position="1"/>
        <end position="21"/>
    </location>
</feature>
<feature type="chain" id="PRO_0000274688" description="Potassium channel toxin Hge-beta-KTx" evidence="7 8">
    <location>
        <begin position="22"/>
        <end position="79"/>
    </location>
</feature>
<feature type="domain" description="BetaSPN-type CS-alpha/beta" evidence="2">
    <location>
        <begin position="48"/>
        <end position="79"/>
    </location>
</feature>
<feature type="disulfide bond" evidence="2">
    <location>
        <begin position="51"/>
        <end position="71"/>
    </location>
</feature>
<feature type="disulfide bond" evidence="2">
    <location>
        <begin position="58"/>
        <end position="76"/>
    </location>
</feature>
<feature type="disulfide bond" evidence="2">
    <location>
        <begin position="62"/>
        <end position="78"/>
    </location>
</feature>
<sequence>MAKSFFAAFLIIMLISSLVDGKSTVGQKLKKKLNQAVDKVKEVLNKSEYMCPVVSSFCKQHCARLGKSGQCDLLECICS</sequence>
<proteinExistence type="evidence at protein level"/>
<keyword id="KW-0044">Antibiotic</keyword>
<keyword id="KW-0929">Antimicrobial</keyword>
<keyword id="KW-0903">Direct protein sequencing</keyword>
<keyword id="KW-1015">Disulfide bond</keyword>
<keyword id="KW-0872">Ion channel impairing toxin</keyword>
<keyword id="KW-0528">Neurotoxin</keyword>
<keyword id="KW-0632">Potassium channel impairing toxin</keyword>
<keyword id="KW-0964">Secreted</keyword>
<keyword id="KW-0732">Signal</keyword>
<keyword id="KW-0800">Toxin</keyword>
<keyword id="KW-1220">Voltage-gated potassium channel impairing toxin</keyword>
<evidence type="ECO:0000255" key="1"/>
<evidence type="ECO:0000255" key="2">
    <source>
        <dbReference type="PROSITE-ProRule" id="PRU01209"/>
    </source>
</evidence>
<evidence type="ECO:0000269" key="3">
    <source>
    </source>
</evidence>
<evidence type="ECO:0000269" key="4">
    <source>
    </source>
</evidence>
<evidence type="ECO:0000303" key="5">
    <source>
    </source>
</evidence>
<evidence type="ECO:0000305" key="6"/>
<evidence type="ECO:0000305" key="7">
    <source>
    </source>
</evidence>
<evidence type="ECO:0000305" key="8">
    <source>
    </source>
</evidence>